<dbReference type="EC" id="4.2.1.33" evidence="1"/>
<dbReference type="EMBL" id="CP000946">
    <property type="protein sequence ID" value="ACA79200.1"/>
    <property type="molecule type" value="Genomic_DNA"/>
</dbReference>
<dbReference type="RefSeq" id="WP_000818228.1">
    <property type="nucleotide sequence ID" value="NZ_MTFT01000035.1"/>
</dbReference>
<dbReference type="SMR" id="B1IRA7"/>
<dbReference type="GeneID" id="93777364"/>
<dbReference type="KEGG" id="ecl:EcolC_3586"/>
<dbReference type="HOGENOM" id="CLU_081378_0_3_6"/>
<dbReference type="UniPathway" id="UPA00048">
    <property type="reaction ID" value="UER00071"/>
</dbReference>
<dbReference type="GO" id="GO:0009316">
    <property type="term" value="C:3-isopropylmalate dehydratase complex"/>
    <property type="evidence" value="ECO:0007669"/>
    <property type="project" value="InterPro"/>
</dbReference>
<dbReference type="GO" id="GO:0003861">
    <property type="term" value="F:3-isopropylmalate dehydratase activity"/>
    <property type="evidence" value="ECO:0007669"/>
    <property type="project" value="UniProtKB-UniRule"/>
</dbReference>
<dbReference type="GO" id="GO:0009098">
    <property type="term" value="P:L-leucine biosynthetic process"/>
    <property type="evidence" value="ECO:0007669"/>
    <property type="project" value="UniProtKB-UniRule"/>
</dbReference>
<dbReference type="CDD" id="cd01577">
    <property type="entry name" value="IPMI_Swivel"/>
    <property type="match status" value="1"/>
</dbReference>
<dbReference type="FunFam" id="3.20.19.10:FF:000003">
    <property type="entry name" value="3-isopropylmalate dehydratase small subunit"/>
    <property type="match status" value="1"/>
</dbReference>
<dbReference type="Gene3D" id="3.20.19.10">
    <property type="entry name" value="Aconitase, domain 4"/>
    <property type="match status" value="1"/>
</dbReference>
<dbReference type="HAMAP" id="MF_01031">
    <property type="entry name" value="LeuD_type1"/>
    <property type="match status" value="1"/>
</dbReference>
<dbReference type="InterPro" id="IPR004431">
    <property type="entry name" value="3-IsopropMal_deHydase_ssu"/>
</dbReference>
<dbReference type="InterPro" id="IPR015928">
    <property type="entry name" value="Aconitase/3IPM_dehydase_swvl"/>
</dbReference>
<dbReference type="InterPro" id="IPR000573">
    <property type="entry name" value="AconitaseA/IPMdHydase_ssu_swvl"/>
</dbReference>
<dbReference type="InterPro" id="IPR033940">
    <property type="entry name" value="IPMI_Swivel"/>
</dbReference>
<dbReference type="InterPro" id="IPR050075">
    <property type="entry name" value="LeuD"/>
</dbReference>
<dbReference type="NCBIfam" id="TIGR00171">
    <property type="entry name" value="leuD"/>
    <property type="match status" value="1"/>
</dbReference>
<dbReference type="NCBIfam" id="NF002458">
    <property type="entry name" value="PRK01641.1"/>
    <property type="match status" value="1"/>
</dbReference>
<dbReference type="PANTHER" id="PTHR43345:SF5">
    <property type="entry name" value="3-ISOPROPYLMALATE DEHYDRATASE SMALL SUBUNIT"/>
    <property type="match status" value="1"/>
</dbReference>
<dbReference type="PANTHER" id="PTHR43345">
    <property type="entry name" value="3-ISOPROPYLMALATE DEHYDRATASE SMALL SUBUNIT 2-RELATED-RELATED"/>
    <property type="match status" value="1"/>
</dbReference>
<dbReference type="Pfam" id="PF00694">
    <property type="entry name" value="Aconitase_C"/>
    <property type="match status" value="1"/>
</dbReference>
<dbReference type="SUPFAM" id="SSF52016">
    <property type="entry name" value="LeuD/IlvD-like"/>
    <property type="match status" value="1"/>
</dbReference>
<proteinExistence type="inferred from homology"/>
<accession>B1IRA7</accession>
<keyword id="KW-0028">Amino-acid biosynthesis</keyword>
<keyword id="KW-0100">Branched-chain amino acid biosynthesis</keyword>
<keyword id="KW-0432">Leucine biosynthesis</keyword>
<keyword id="KW-0456">Lyase</keyword>
<evidence type="ECO:0000255" key="1">
    <source>
        <dbReference type="HAMAP-Rule" id="MF_01031"/>
    </source>
</evidence>
<comment type="function">
    <text evidence="1">Catalyzes the isomerization between 2-isopropylmalate and 3-isopropylmalate, via the formation of 2-isopropylmaleate.</text>
</comment>
<comment type="catalytic activity">
    <reaction evidence="1">
        <text>(2R,3S)-3-isopropylmalate = (2S)-2-isopropylmalate</text>
        <dbReference type="Rhea" id="RHEA:32287"/>
        <dbReference type="ChEBI" id="CHEBI:1178"/>
        <dbReference type="ChEBI" id="CHEBI:35121"/>
        <dbReference type="EC" id="4.2.1.33"/>
    </reaction>
</comment>
<comment type="pathway">
    <text evidence="1">Amino-acid biosynthesis; L-leucine biosynthesis; L-leucine from 3-methyl-2-oxobutanoate: step 2/4.</text>
</comment>
<comment type="subunit">
    <text evidence="1">Heterodimer of LeuC and LeuD.</text>
</comment>
<comment type="similarity">
    <text evidence="1">Belongs to the LeuD family. LeuD type 1 subfamily.</text>
</comment>
<sequence>MAEKFIKHTGLVVPLDAANVDTDAIIPKQFLQKVTRTGFGAHLFNDWRFLDEKGQQPNPDFVLNFPQYQGASILLARENFGCGSSREHAPWALTDYGFKVVIAPSFADIFYGNSFNNQLLPVKLSDAEVDELFALVKANPGIHFDVDLEAQEVKAGEKTYRFTIDAFRRHCMMNGLDSIGLTLQHDDAIAAYEAKQPAFMN</sequence>
<name>LEUD_ECOLC</name>
<feature type="chain" id="PRO_1000084251" description="3-isopropylmalate dehydratase small subunit">
    <location>
        <begin position="1"/>
        <end position="201"/>
    </location>
</feature>
<gene>
    <name evidence="1" type="primary">leuD</name>
    <name type="ordered locus">EcolC_3586</name>
</gene>
<organism>
    <name type="scientific">Escherichia coli (strain ATCC 8739 / DSM 1576 / NBRC 3972 / NCIMB 8545 / WDCM 00012 / Crooks)</name>
    <dbReference type="NCBI Taxonomy" id="481805"/>
    <lineage>
        <taxon>Bacteria</taxon>
        <taxon>Pseudomonadati</taxon>
        <taxon>Pseudomonadota</taxon>
        <taxon>Gammaproteobacteria</taxon>
        <taxon>Enterobacterales</taxon>
        <taxon>Enterobacteriaceae</taxon>
        <taxon>Escherichia</taxon>
    </lineage>
</organism>
<protein>
    <recommendedName>
        <fullName evidence="1">3-isopropylmalate dehydratase small subunit</fullName>
        <ecNumber evidence="1">4.2.1.33</ecNumber>
    </recommendedName>
    <alternativeName>
        <fullName evidence="1">Alpha-IPM isomerase</fullName>
        <shortName evidence="1">IPMI</shortName>
    </alternativeName>
    <alternativeName>
        <fullName evidence="1">Isopropylmalate isomerase</fullName>
    </alternativeName>
</protein>
<reference key="1">
    <citation type="submission" date="2008-02" db="EMBL/GenBank/DDBJ databases">
        <title>Complete sequence of Escherichia coli C str. ATCC 8739.</title>
        <authorList>
            <person name="Copeland A."/>
            <person name="Lucas S."/>
            <person name="Lapidus A."/>
            <person name="Glavina del Rio T."/>
            <person name="Dalin E."/>
            <person name="Tice H."/>
            <person name="Bruce D."/>
            <person name="Goodwin L."/>
            <person name="Pitluck S."/>
            <person name="Kiss H."/>
            <person name="Brettin T."/>
            <person name="Detter J.C."/>
            <person name="Han C."/>
            <person name="Kuske C.R."/>
            <person name="Schmutz J."/>
            <person name="Larimer F."/>
            <person name="Land M."/>
            <person name="Hauser L."/>
            <person name="Kyrpides N."/>
            <person name="Mikhailova N."/>
            <person name="Ingram L."/>
            <person name="Richardson P."/>
        </authorList>
    </citation>
    <scope>NUCLEOTIDE SEQUENCE [LARGE SCALE GENOMIC DNA]</scope>
    <source>
        <strain>ATCC 8739 / DSM 1576 / NBRC 3972 / NCIMB 8545 / WDCM 00012 / Crooks</strain>
    </source>
</reference>